<keyword id="KW-1185">Reference proteome</keyword>
<evidence type="ECO:0000305" key="1"/>
<feature type="chain" id="PRO_0000210572" description="Uncharacterized protein MG371">
    <location>
        <begin position="1"/>
        <end position="324"/>
    </location>
</feature>
<organism>
    <name type="scientific">Mycoplasma genitalium (strain ATCC 33530 / DSM 19775 / NCTC 10195 / G37)</name>
    <name type="common">Mycoplasmoides genitalium</name>
    <dbReference type="NCBI Taxonomy" id="243273"/>
    <lineage>
        <taxon>Bacteria</taxon>
        <taxon>Bacillati</taxon>
        <taxon>Mycoplasmatota</taxon>
        <taxon>Mycoplasmoidales</taxon>
        <taxon>Mycoplasmoidaceae</taxon>
        <taxon>Mycoplasmoides</taxon>
    </lineage>
</organism>
<gene>
    <name type="ordered locus">MG371</name>
</gene>
<comment type="similarity">
    <text evidence="1">Belongs to the mgp1/MG371 family.</text>
</comment>
<accession>Q49428</accession>
<accession>Q49366</accession>
<sequence>MISIDPQFIKNFSKKVKQFDKFSLFVHVNPDFDAFGSAFAFKTFLNTFFSEKKAYVMGSYNINADGRELFPFEQTDINDDFVKESLAIIFDTSNQERVLTQKHKLAKETVRIDHHPRTEKFADMEWIDSSFSATAEMIGYLILQMGYKLNDEIASYLYAGIITDTQRFWGPTTTPQTFALTAKLMETGFNRNKVHDAVYLKPLLEHKYFSYVLSKAKITKNGLAYALIKKGAYKHFGVVSPLPMVHALNNIKGVKIWTTVYFNESIKKWIGSIRSRNIPINNFAQMFNGGGHKYAAAFVLDEKNQFMKLVQIMDDFLAKQNENS</sequence>
<reference key="1">
    <citation type="journal article" date="1995" name="Science">
        <title>The minimal gene complement of Mycoplasma genitalium.</title>
        <authorList>
            <person name="Fraser C.M."/>
            <person name="Gocayne J.D."/>
            <person name="White O."/>
            <person name="Adams M.D."/>
            <person name="Clayton R.A."/>
            <person name="Fleischmann R.D."/>
            <person name="Bult C.J."/>
            <person name="Kerlavage A.R."/>
            <person name="Sutton G.G."/>
            <person name="Kelley J.M."/>
            <person name="Fritchman J.L."/>
            <person name="Weidman J.F."/>
            <person name="Small K.V."/>
            <person name="Sandusky M."/>
            <person name="Fuhrmann J.L."/>
            <person name="Nguyen D.T."/>
            <person name="Utterback T.R."/>
            <person name="Saudek D.M."/>
            <person name="Phillips C.A."/>
            <person name="Merrick J.M."/>
            <person name="Tomb J.-F."/>
            <person name="Dougherty B.A."/>
            <person name="Bott K.F."/>
            <person name="Hu P.-C."/>
            <person name="Lucier T.S."/>
            <person name="Peterson S.N."/>
            <person name="Smith H.O."/>
            <person name="Hutchison C.A. III"/>
            <person name="Venter J.C."/>
        </authorList>
    </citation>
    <scope>NUCLEOTIDE SEQUENCE [LARGE SCALE GENOMIC DNA]</scope>
    <source>
        <strain>ATCC 33530 / DSM 19775 / NCTC 10195 / G37</strain>
    </source>
</reference>
<reference key="2">
    <citation type="journal article" date="1993" name="J. Bacteriol.">
        <title>A survey of the Mycoplasma genitalium genome by using random sequencing.</title>
        <authorList>
            <person name="Peterson S.N."/>
            <person name="Hu P.-C."/>
            <person name="Bott K.F."/>
            <person name="Hutchison C.A. III"/>
        </authorList>
    </citation>
    <scope>NUCLEOTIDE SEQUENCE [GENOMIC DNA] OF 117-229</scope>
    <source>
        <strain>ATCC 33530 / DSM 19775 / NCTC 10195 / G37</strain>
    </source>
</reference>
<dbReference type="EMBL" id="L43967">
    <property type="protein sequence ID" value="AAC71598.1"/>
    <property type="molecule type" value="Genomic_DNA"/>
</dbReference>
<dbReference type="EMBL" id="U02263">
    <property type="protein sequence ID" value="AAD12529.1"/>
    <property type="molecule type" value="Genomic_DNA"/>
</dbReference>
<dbReference type="PIR" id="A64241">
    <property type="entry name" value="A64241"/>
</dbReference>
<dbReference type="RefSeq" id="WP_010869455.1">
    <property type="nucleotide sequence ID" value="NC_000908.2"/>
</dbReference>
<dbReference type="SMR" id="Q49428"/>
<dbReference type="FunCoup" id="Q49428">
    <property type="interactions" value="26"/>
</dbReference>
<dbReference type="STRING" id="243273.MG_371"/>
<dbReference type="GeneID" id="88282554"/>
<dbReference type="KEGG" id="mge:MG_371"/>
<dbReference type="eggNOG" id="COG0618">
    <property type="taxonomic scope" value="Bacteria"/>
</dbReference>
<dbReference type="HOGENOM" id="CLU_039720_1_0_14"/>
<dbReference type="InParanoid" id="Q49428"/>
<dbReference type="OrthoDB" id="9803668at2"/>
<dbReference type="BioCyc" id="MGEN243273:G1GJ2-465-MONOMER"/>
<dbReference type="Proteomes" id="UP000000807">
    <property type="component" value="Chromosome"/>
</dbReference>
<dbReference type="GO" id="GO:0003676">
    <property type="term" value="F:nucleic acid binding"/>
    <property type="evidence" value="ECO:0007669"/>
    <property type="project" value="InterPro"/>
</dbReference>
<dbReference type="Gene3D" id="3.10.310.30">
    <property type="match status" value="1"/>
</dbReference>
<dbReference type="Gene3D" id="3.90.1640.10">
    <property type="entry name" value="inorganic pyrophosphatase (n-terminal core)"/>
    <property type="match status" value="1"/>
</dbReference>
<dbReference type="InterPro" id="IPR001667">
    <property type="entry name" value="DDH_dom"/>
</dbReference>
<dbReference type="InterPro" id="IPR038763">
    <property type="entry name" value="DHH_sf"/>
</dbReference>
<dbReference type="InterPro" id="IPR003156">
    <property type="entry name" value="DHHA1_dom"/>
</dbReference>
<dbReference type="InterPro" id="IPR051319">
    <property type="entry name" value="Oligoribo/pAp-PDE_c-di-AMP_PDE"/>
</dbReference>
<dbReference type="PANTHER" id="PTHR47618">
    <property type="entry name" value="BIFUNCTIONAL OLIGORIBONUCLEASE AND PAP PHOSPHATASE NRNA"/>
    <property type="match status" value="1"/>
</dbReference>
<dbReference type="PANTHER" id="PTHR47618:SF1">
    <property type="entry name" value="BIFUNCTIONAL OLIGORIBONUCLEASE AND PAP PHOSPHATASE NRNA"/>
    <property type="match status" value="1"/>
</dbReference>
<dbReference type="Pfam" id="PF01368">
    <property type="entry name" value="DHH"/>
    <property type="match status" value="1"/>
</dbReference>
<dbReference type="Pfam" id="PF02272">
    <property type="entry name" value="DHHA1"/>
    <property type="match status" value="1"/>
</dbReference>
<dbReference type="SUPFAM" id="SSF64182">
    <property type="entry name" value="DHH phosphoesterases"/>
    <property type="match status" value="1"/>
</dbReference>
<proteinExistence type="inferred from homology"/>
<name>Y371_MYCGE</name>
<protein>
    <recommendedName>
        <fullName>Uncharacterized protein MG371</fullName>
    </recommendedName>
</protein>